<accession>B6I227</accession>
<protein>
    <recommendedName>
        <fullName evidence="1">Large ribosomal subunit protein uL16</fullName>
    </recommendedName>
    <alternativeName>
        <fullName evidence="2">50S ribosomal protein L16</fullName>
    </alternativeName>
</protein>
<dbReference type="EMBL" id="AP009240">
    <property type="protein sequence ID" value="BAG79112.1"/>
    <property type="molecule type" value="Genomic_DNA"/>
</dbReference>
<dbReference type="RefSeq" id="WP_000941212.1">
    <property type="nucleotide sequence ID" value="NC_011415.1"/>
</dbReference>
<dbReference type="SMR" id="B6I227"/>
<dbReference type="GeneID" id="93778674"/>
<dbReference type="KEGG" id="ecy:ECSE_3588"/>
<dbReference type="HOGENOM" id="CLU_078858_2_1_6"/>
<dbReference type="Proteomes" id="UP000008199">
    <property type="component" value="Chromosome"/>
</dbReference>
<dbReference type="GO" id="GO:0022625">
    <property type="term" value="C:cytosolic large ribosomal subunit"/>
    <property type="evidence" value="ECO:0007669"/>
    <property type="project" value="TreeGrafter"/>
</dbReference>
<dbReference type="GO" id="GO:0019843">
    <property type="term" value="F:rRNA binding"/>
    <property type="evidence" value="ECO:0007669"/>
    <property type="project" value="UniProtKB-UniRule"/>
</dbReference>
<dbReference type="GO" id="GO:0003735">
    <property type="term" value="F:structural constituent of ribosome"/>
    <property type="evidence" value="ECO:0007669"/>
    <property type="project" value="InterPro"/>
</dbReference>
<dbReference type="GO" id="GO:0000049">
    <property type="term" value="F:tRNA binding"/>
    <property type="evidence" value="ECO:0007669"/>
    <property type="project" value="UniProtKB-KW"/>
</dbReference>
<dbReference type="GO" id="GO:0006412">
    <property type="term" value="P:translation"/>
    <property type="evidence" value="ECO:0007669"/>
    <property type="project" value="UniProtKB-UniRule"/>
</dbReference>
<dbReference type="CDD" id="cd01433">
    <property type="entry name" value="Ribosomal_L16_L10e"/>
    <property type="match status" value="1"/>
</dbReference>
<dbReference type="FunFam" id="3.90.1170.10:FF:000001">
    <property type="entry name" value="50S ribosomal protein L16"/>
    <property type="match status" value="1"/>
</dbReference>
<dbReference type="Gene3D" id="3.90.1170.10">
    <property type="entry name" value="Ribosomal protein L10e/L16"/>
    <property type="match status" value="1"/>
</dbReference>
<dbReference type="HAMAP" id="MF_01342">
    <property type="entry name" value="Ribosomal_uL16"/>
    <property type="match status" value="1"/>
</dbReference>
<dbReference type="InterPro" id="IPR047873">
    <property type="entry name" value="Ribosomal_uL16"/>
</dbReference>
<dbReference type="InterPro" id="IPR000114">
    <property type="entry name" value="Ribosomal_uL16_bact-type"/>
</dbReference>
<dbReference type="InterPro" id="IPR020798">
    <property type="entry name" value="Ribosomal_uL16_CS"/>
</dbReference>
<dbReference type="InterPro" id="IPR016180">
    <property type="entry name" value="Ribosomal_uL16_dom"/>
</dbReference>
<dbReference type="InterPro" id="IPR036920">
    <property type="entry name" value="Ribosomal_uL16_sf"/>
</dbReference>
<dbReference type="NCBIfam" id="TIGR01164">
    <property type="entry name" value="rplP_bact"/>
    <property type="match status" value="1"/>
</dbReference>
<dbReference type="PANTHER" id="PTHR12220">
    <property type="entry name" value="50S/60S RIBOSOMAL PROTEIN L16"/>
    <property type="match status" value="1"/>
</dbReference>
<dbReference type="PANTHER" id="PTHR12220:SF13">
    <property type="entry name" value="LARGE RIBOSOMAL SUBUNIT PROTEIN UL16M"/>
    <property type="match status" value="1"/>
</dbReference>
<dbReference type="Pfam" id="PF00252">
    <property type="entry name" value="Ribosomal_L16"/>
    <property type="match status" value="1"/>
</dbReference>
<dbReference type="PRINTS" id="PR00060">
    <property type="entry name" value="RIBOSOMALL16"/>
</dbReference>
<dbReference type="SUPFAM" id="SSF54686">
    <property type="entry name" value="Ribosomal protein L16p/L10e"/>
    <property type="match status" value="1"/>
</dbReference>
<dbReference type="PROSITE" id="PS00586">
    <property type="entry name" value="RIBOSOMAL_L16_1"/>
    <property type="match status" value="1"/>
</dbReference>
<dbReference type="PROSITE" id="PS00701">
    <property type="entry name" value="RIBOSOMAL_L16_2"/>
    <property type="match status" value="1"/>
</dbReference>
<organism>
    <name type="scientific">Escherichia coli (strain SE11)</name>
    <dbReference type="NCBI Taxonomy" id="409438"/>
    <lineage>
        <taxon>Bacteria</taxon>
        <taxon>Pseudomonadati</taxon>
        <taxon>Pseudomonadota</taxon>
        <taxon>Gammaproteobacteria</taxon>
        <taxon>Enterobacterales</taxon>
        <taxon>Enterobacteriaceae</taxon>
        <taxon>Escherichia</taxon>
    </lineage>
</organism>
<evidence type="ECO:0000255" key="1">
    <source>
        <dbReference type="HAMAP-Rule" id="MF_01342"/>
    </source>
</evidence>
<evidence type="ECO:0000305" key="2"/>
<proteinExistence type="inferred from homology"/>
<reference key="1">
    <citation type="journal article" date="2008" name="DNA Res.">
        <title>Complete genome sequence and comparative analysis of the wild-type commensal Escherichia coli strain SE11 isolated from a healthy adult.</title>
        <authorList>
            <person name="Oshima K."/>
            <person name="Toh H."/>
            <person name="Ogura Y."/>
            <person name="Sasamoto H."/>
            <person name="Morita H."/>
            <person name="Park S.-H."/>
            <person name="Ooka T."/>
            <person name="Iyoda S."/>
            <person name="Taylor T.D."/>
            <person name="Hayashi T."/>
            <person name="Itoh K."/>
            <person name="Hattori M."/>
        </authorList>
    </citation>
    <scope>NUCLEOTIDE SEQUENCE [LARGE SCALE GENOMIC DNA]</scope>
    <source>
        <strain>SE11</strain>
    </source>
</reference>
<gene>
    <name evidence="1" type="primary">rplP</name>
    <name type="ordered locus">ECSE_3588</name>
</gene>
<comment type="function">
    <text evidence="1">Binds 23S rRNA and is also seen to make contacts with the A and possibly P site tRNAs.</text>
</comment>
<comment type="subunit">
    <text evidence="1">Part of the 50S ribosomal subunit.</text>
</comment>
<comment type="similarity">
    <text evidence="1">Belongs to the universal ribosomal protein uL16 family.</text>
</comment>
<feature type="chain" id="PRO_1000142969" description="Large ribosomal subunit protein uL16">
    <location>
        <begin position="1"/>
        <end position="136"/>
    </location>
</feature>
<sequence>MLQPKRTKFRKMHKGRNRGLAQGTDVSFGSFGLKAVGRGRLTARQIEAARRAMTRAVKRQGKIWIRVFPDKPITEKPLAVRMGKGKGNVEYWVALIQPGKVLYEMDGVPEELAREAFKLAAAKLPIKTTFVTKTVM</sequence>
<keyword id="KW-0687">Ribonucleoprotein</keyword>
<keyword id="KW-0689">Ribosomal protein</keyword>
<keyword id="KW-0694">RNA-binding</keyword>
<keyword id="KW-0699">rRNA-binding</keyword>
<keyword id="KW-0820">tRNA-binding</keyword>
<name>RL16_ECOSE</name>